<name>PETG_SYNY3</name>
<proteinExistence type="evidence at protein level"/>
<reference key="1">
    <citation type="journal article" date="1996" name="DNA Res.">
        <title>Sequence analysis of the genome of the unicellular cyanobacterium Synechocystis sp. strain PCC6803. II. Sequence determination of the entire genome and assignment of potential protein-coding regions.</title>
        <authorList>
            <person name="Kaneko T."/>
            <person name="Sato S."/>
            <person name="Kotani H."/>
            <person name="Tanaka A."/>
            <person name="Asamizu E."/>
            <person name="Nakamura Y."/>
            <person name="Miyajima N."/>
            <person name="Hirosawa M."/>
            <person name="Sugiura M."/>
            <person name="Sasamoto S."/>
            <person name="Kimura T."/>
            <person name="Hosouchi T."/>
            <person name="Matsuno A."/>
            <person name="Muraki A."/>
            <person name="Nakazaki N."/>
            <person name="Naruo K."/>
            <person name="Okumura S."/>
            <person name="Shimpo S."/>
            <person name="Takeuchi C."/>
            <person name="Wada T."/>
            <person name="Watanabe A."/>
            <person name="Yamada M."/>
            <person name="Yasuda M."/>
            <person name="Tabata S."/>
        </authorList>
    </citation>
    <scope>NUCLEOTIDE SEQUENCE [LARGE SCALE GENOMIC DNA]</scope>
    <source>
        <strain>ATCC 27184 / PCC 6803 / Kazusa</strain>
    </source>
</reference>
<dbReference type="EMBL" id="BA000022">
    <property type="protein sequence ID" value="BAA18236.1"/>
    <property type="molecule type" value="Genomic_DNA"/>
</dbReference>
<dbReference type="PIR" id="S75675">
    <property type="entry name" value="S75675"/>
</dbReference>
<dbReference type="PDB" id="7R0W">
    <property type="method" value="EM"/>
    <property type="resolution" value="2.80 A"/>
    <property type="chains" value="G/O=1-38"/>
</dbReference>
<dbReference type="PDB" id="7ZXY">
    <property type="method" value="EM"/>
    <property type="resolution" value="3.15 A"/>
    <property type="chains" value="G/O=1-37"/>
</dbReference>
<dbReference type="PDBsum" id="7R0W"/>
<dbReference type="PDBsum" id="7ZXY"/>
<dbReference type="EMDB" id="EMD-14224"/>
<dbReference type="EMDB" id="EMD-15017"/>
<dbReference type="SMR" id="P74149"/>
<dbReference type="IntAct" id="P74149">
    <property type="interactions" value="6"/>
</dbReference>
<dbReference type="STRING" id="1148.gene:10499110"/>
<dbReference type="PaxDb" id="1148-1653321"/>
<dbReference type="EnsemblBacteria" id="BAA18236">
    <property type="protein sequence ID" value="BAA18236"/>
    <property type="gene ID" value="BAA18236"/>
</dbReference>
<dbReference type="KEGG" id="syn:smr0010"/>
<dbReference type="eggNOG" id="ENOG5033BE9">
    <property type="taxonomic scope" value="Bacteria"/>
</dbReference>
<dbReference type="InParanoid" id="P74149"/>
<dbReference type="BRENDA" id="7.1.1.6">
    <property type="organism ID" value="382"/>
</dbReference>
<dbReference type="Proteomes" id="UP000001425">
    <property type="component" value="Chromosome"/>
</dbReference>
<dbReference type="GO" id="GO:0009512">
    <property type="term" value="C:cytochrome b6f complex"/>
    <property type="evidence" value="ECO:0007669"/>
    <property type="project" value="InterPro"/>
</dbReference>
<dbReference type="GO" id="GO:0031676">
    <property type="term" value="C:plasma membrane-derived thylakoid membrane"/>
    <property type="evidence" value="ECO:0007669"/>
    <property type="project" value="UniProtKB-SubCell"/>
</dbReference>
<dbReference type="GO" id="GO:0045158">
    <property type="term" value="F:electron transporter, transferring electrons within cytochrome b6/f complex of photosystem II activity"/>
    <property type="evidence" value="ECO:0007669"/>
    <property type="project" value="UniProtKB-UniRule"/>
</dbReference>
<dbReference type="GO" id="GO:0017004">
    <property type="term" value="P:cytochrome complex assembly"/>
    <property type="evidence" value="ECO:0007669"/>
    <property type="project" value="UniProtKB-UniRule"/>
</dbReference>
<dbReference type="GO" id="GO:0015979">
    <property type="term" value="P:photosynthesis"/>
    <property type="evidence" value="ECO:0007669"/>
    <property type="project" value="UniProtKB-KW"/>
</dbReference>
<dbReference type="HAMAP" id="MF_00432">
    <property type="entry name" value="Cytb6_f_PetG"/>
    <property type="match status" value="1"/>
</dbReference>
<dbReference type="InterPro" id="IPR003683">
    <property type="entry name" value="Cyt_6/f_cplx_su5"/>
</dbReference>
<dbReference type="InterPro" id="IPR036099">
    <property type="entry name" value="Cyt_6/f_cplx_su5_sf"/>
</dbReference>
<dbReference type="NCBIfam" id="NF001907">
    <property type="entry name" value="PRK00665.1"/>
    <property type="match status" value="1"/>
</dbReference>
<dbReference type="Pfam" id="PF02529">
    <property type="entry name" value="PetG"/>
    <property type="match status" value="1"/>
</dbReference>
<dbReference type="PIRSF" id="PIRSF000034">
    <property type="entry name" value="Cyt_b6-f_V"/>
    <property type="match status" value="1"/>
</dbReference>
<dbReference type="SUPFAM" id="SSF103446">
    <property type="entry name" value="PetG subunit of the cytochrome b6f complex"/>
    <property type="match status" value="1"/>
</dbReference>
<accession>P74149</accession>
<feature type="chain" id="PRO_0000216418" description="Cytochrome b6-f complex subunit 5">
    <location>
        <begin position="1"/>
        <end position="38"/>
    </location>
</feature>
<feature type="transmembrane region" description="Helical" evidence="1">
    <location>
        <begin position="5"/>
        <end position="25"/>
    </location>
</feature>
<feature type="helix" evidence="2">
    <location>
        <begin position="4"/>
        <end position="29"/>
    </location>
</feature>
<evidence type="ECO:0000255" key="1">
    <source>
        <dbReference type="HAMAP-Rule" id="MF_00432"/>
    </source>
</evidence>
<evidence type="ECO:0007829" key="2">
    <source>
        <dbReference type="PDB" id="7R0W"/>
    </source>
</evidence>
<protein>
    <recommendedName>
        <fullName evidence="1">Cytochrome b6-f complex subunit 5</fullName>
    </recommendedName>
    <alternativeName>
        <fullName evidence="1">Cytochrome b6-f complex subunit PetG</fullName>
    </alternativeName>
    <alternativeName>
        <fullName evidence="1">Cytochrome b6-f complex subunit V</fullName>
    </alternativeName>
</protein>
<organism>
    <name type="scientific">Synechocystis sp. (strain ATCC 27184 / PCC 6803 / Kazusa)</name>
    <dbReference type="NCBI Taxonomy" id="1111708"/>
    <lineage>
        <taxon>Bacteria</taxon>
        <taxon>Bacillati</taxon>
        <taxon>Cyanobacteriota</taxon>
        <taxon>Cyanophyceae</taxon>
        <taxon>Synechococcales</taxon>
        <taxon>Merismopediaceae</taxon>
        <taxon>Synechocystis</taxon>
    </lineage>
</organism>
<comment type="function">
    <text evidence="1">Component of the cytochrome b6-f complex, which mediates electron transfer between photosystem II (PSII) and photosystem I (PSI), cyclic electron flow around PSI, and state transitions. PetG is required for either the stability or assembly of the cytochrome b6-f complex.</text>
</comment>
<comment type="subunit">
    <text evidence="1">The 4 large subunits of the cytochrome b6-f complex are cytochrome b6, subunit IV (17 kDa polypeptide, PetD), cytochrome f and the Rieske protein, while the 4 small subunits are PetG, PetL, PetM and PetN. The complex functions as a dimer.</text>
</comment>
<comment type="subcellular location">
    <subcellularLocation>
        <location evidence="1">Cellular thylakoid membrane</location>
        <topology evidence="1">Single-pass membrane protein</topology>
    </subcellularLocation>
</comment>
<comment type="similarity">
    <text evidence="1">Belongs to the PetG family.</text>
</comment>
<keyword id="KW-0002">3D-structure</keyword>
<keyword id="KW-0249">Electron transport</keyword>
<keyword id="KW-0472">Membrane</keyword>
<keyword id="KW-0602">Photosynthesis</keyword>
<keyword id="KW-1185">Reference proteome</keyword>
<keyword id="KW-0793">Thylakoid</keyword>
<keyword id="KW-0812">Transmembrane</keyword>
<keyword id="KW-1133">Transmembrane helix</keyword>
<keyword id="KW-0813">Transport</keyword>
<gene>
    <name evidence="1" type="primary">petG</name>
    <name type="ordered locus">smr0010</name>
</gene>
<sequence length="38" mass="4175">MIEPLLLGIVLGLIPVTLAGLFVAAYLQYKRGNQFNLD</sequence>